<keyword id="KW-0256">Endoplasmic reticulum</keyword>
<keyword id="KW-0328">Glycosyltransferase</keyword>
<keyword id="KW-0472">Membrane</keyword>
<keyword id="KW-1185">Reference proteome</keyword>
<keyword id="KW-0735">Signal-anchor</keyword>
<keyword id="KW-0808">Transferase</keyword>
<keyword id="KW-0812">Transmembrane</keyword>
<keyword id="KW-1133">Transmembrane helix</keyword>
<dbReference type="EC" id="2.4.1.-"/>
<dbReference type="EMBL" id="CU329671">
    <property type="protein sequence ID" value="CAA17907.1"/>
    <property type="molecule type" value="Genomic_DNA"/>
</dbReference>
<dbReference type="PIR" id="T39616">
    <property type="entry name" value="T39616"/>
</dbReference>
<dbReference type="RefSeq" id="NP_595938.1">
    <property type="nucleotide sequence ID" value="NM_001021846.2"/>
</dbReference>
<dbReference type="SMR" id="O42944"/>
<dbReference type="BioGRID" id="276450">
    <property type="interactions" value="3"/>
</dbReference>
<dbReference type="FunCoup" id="O42944">
    <property type="interactions" value="120"/>
</dbReference>
<dbReference type="STRING" id="284812.O42944"/>
<dbReference type="CAZy" id="GT15">
    <property type="family name" value="Glycosyltransferase Family 15"/>
</dbReference>
<dbReference type="iPTMnet" id="O42944"/>
<dbReference type="SwissPalm" id="O42944"/>
<dbReference type="PaxDb" id="4896-SPBC16H5.09c.1"/>
<dbReference type="EnsemblFungi" id="SPBC16H5.09c.1">
    <property type="protein sequence ID" value="SPBC16H5.09c.1:pep"/>
    <property type="gene ID" value="SPBC16H5.09c"/>
</dbReference>
<dbReference type="GeneID" id="2539904"/>
<dbReference type="KEGG" id="spo:2539904"/>
<dbReference type="PomBase" id="SPBC16H5.09c">
    <property type="gene designation" value="omh2"/>
</dbReference>
<dbReference type="VEuPathDB" id="FungiDB:SPBC16H5.09c"/>
<dbReference type="eggNOG" id="KOG4472">
    <property type="taxonomic scope" value="Eukaryota"/>
</dbReference>
<dbReference type="HOGENOM" id="CLU_024327_4_1_1"/>
<dbReference type="InParanoid" id="O42944"/>
<dbReference type="OMA" id="THETWVN"/>
<dbReference type="PhylomeDB" id="O42944"/>
<dbReference type="PRO" id="PR:O42944"/>
<dbReference type="Proteomes" id="UP000002485">
    <property type="component" value="Chromosome II"/>
</dbReference>
<dbReference type="GO" id="GO:0005789">
    <property type="term" value="C:endoplasmic reticulum membrane"/>
    <property type="evidence" value="ECO:0007669"/>
    <property type="project" value="UniProtKB-SubCell"/>
</dbReference>
<dbReference type="GO" id="GO:0005794">
    <property type="term" value="C:Golgi apparatus"/>
    <property type="evidence" value="ECO:0000318"/>
    <property type="project" value="GO_Central"/>
</dbReference>
<dbReference type="GO" id="GO:0000139">
    <property type="term" value="C:Golgi membrane"/>
    <property type="evidence" value="ECO:0000250"/>
    <property type="project" value="PomBase"/>
</dbReference>
<dbReference type="GO" id="GO:0000026">
    <property type="term" value="F:alpha-1,2-mannosyltransferase activity"/>
    <property type="evidence" value="ECO:0000318"/>
    <property type="project" value="GO_Central"/>
</dbReference>
<dbReference type="GO" id="GO:0000032">
    <property type="term" value="P:cell wall mannoprotein biosynthetic process"/>
    <property type="evidence" value="ECO:0000318"/>
    <property type="project" value="GO_Central"/>
</dbReference>
<dbReference type="GO" id="GO:0006487">
    <property type="term" value="P:protein N-linked glycosylation"/>
    <property type="evidence" value="ECO:0000318"/>
    <property type="project" value="GO_Central"/>
</dbReference>
<dbReference type="GO" id="GO:0006493">
    <property type="term" value="P:protein O-linked glycosylation"/>
    <property type="evidence" value="ECO:0000318"/>
    <property type="project" value="GO_Central"/>
</dbReference>
<dbReference type="FunFam" id="3.90.550.10:FF:000051">
    <property type="entry name" value="Alpha-1,2-mannosyltransferase (Ktr4)"/>
    <property type="match status" value="1"/>
</dbReference>
<dbReference type="Gene3D" id="3.90.550.10">
    <property type="entry name" value="Spore Coat Polysaccharide Biosynthesis Protein SpsA, Chain A"/>
    <property type="match status" value="1"/>
</dbReference>
<dbReference type="InterPro" id="IPR002685">
    <property type="entry name" value="Glyco_trans_15"/>
</dbReference>
<dbReference type="InterPro" id="IPR029044">
    <property type="entry name" value="Nucleotide-diphossugar_trans"/>
</dbReference>
<dbReference type="PANTHER" id="PTHR31121">
    <property type="entry name" value="ALPHA-1,2 MANNOSYLTRANSFERASE KTR1"/>
    <property type="match status" value="1"/>
</dbReference>
<dbReference type="PANTHER" id="PTHR31121:SF13">
    <property type="entry name" value="O-GLYCOSIDE ALPHA-1,2-MANNOSYLTRANSFERASE HOMOLOG 2"/>
    <property type="match status" value="1"/>
</dbReference>
<dbReference type="Pfam" id="PF01793">
    <property type="entry name" value="Glyco_transf_15"/>
    <property type="match status" value="1"/>
</dbReference>
<dbReference type="PIRSF" id="PIRSF018153">
    <property type="entry name" value="Glyco_trans_15"/>
    <property type="match status" value="1"/>
</dbReference>
<dbReference type="SUPFAM" id="SSF53448">
    <property type="entry name" value="Nucleotide-diphospho-sugar transferases"/>
    <property type="match status" value="1"/>
</dbReference>
<proteinExistence type="inferred from homology"/>
<evidence type="ECO:0000250" key="1"/>
<evidence type="ECO:0000255" key="2"/>
<evidence type="ECO:0000269" key="3">
    <source>
    </source>
</evidence>
<evidence type="ECO:0000305" key="4"/>
<accession>O42944</accession>
<feature type="chain" id="PRO_0000316584" description="O-glycoside alpha-1,2-mannosyltransferase homolog 2">
    <location>
        <begin position="1"/>
        <end position="372"/>
    </location>
</feature>
<feature type="topological domain" description="Cytoplasmic" evidence="2">
    <location>
        <begin position="1"/>
        <end position="6"/>
    </location>
</feature>
<feature type="transmembrane region" description="Helical; Signal-anchor for type II membrane protein" evidence="2">
    <location>
        <begin position="7"/>
        <end position="27"/>
    </location>
</feature>
<feature type="topological domain" description="Lumenal" evidence="2">
    <location>
        <begin position="28"/>
        <end position="372"/>
    </location>
</feature>
<feature type="active site" description="Nucleophile" evidence="2">
    <location>
        <position position="271"/>
    </location>
</feature>
<comment type="function">
    <text evidence="1">Probable mannosyltransferase involved in O-glycosylation of cell wall and secreted proteins.</text>
</comment>
<comment type="subcellular location">
    <subcellularLocation>
        <location evidence="3">Endoplasmic reticulum membrane</location>
        <topology evidence="3">Single-pass type II membrane protein</topology>
    </subcellularLocation>
</comment>
<comment type="similarity">
    <text evidence="4">Belongs to the glycosyltransferase 15 family.</text>
</comment>
<reference key="1">
    <citation type="journal article" date="2002" name="Nature">
        <title>The genome sequence of Schizosaccharomyces pombe.</title>
        <authorList>
            <person name="Wood V."/>
            <person name="Gwilliam R."/>
            <person name="Rajandream M.A."/>
            <person name="Lyne M.H."/>
            <person name="Lyne R."/>
            <person name="Stewart A."/>
            <person name="Sgouros J.G."/>
            <person name="Peat N."/>
            <person name="Hayles J."/>
            <person name="Baker S.G."/>
            <person name="Basham D."/>
            <person name="Bowman S."/>
            <person name="Brooks K."/>
            <person name="Brown D."/>
            <person name="Brown S."/>
            <person name="Chillingworth T."/>
            <person name="Churcher C.M."/>
            <person name="Collins M."/>
            <person name="Connor R."/>
            <person name="Cronin A."/>
            <person name="Davis P."/>
            <person name="Feltwell T."/>
            <person name="Fraser A."/>
            <person name="Gentles S."/>
            <person name="Goble A."/>
            <person name="Hamlin N."/>
            <person name="Harris D.E."/>
            <person name="Hidalgo J."/>
            <person name="Hodgson G."/>
            <person name="Holroyd S."/>
            <person name="Hornsby T."/>
            <person name="Howarth S."/>
            <person name="Huckle E.J."/>
            <person name="Hunt S."/>
            <person name="Jagels K."/>
            <person name="James K.D."/>
            <person name="Jones L."/>
            <person name="Jones M."/>
            <person name="Leather S."/>
            <person name="McDonald S."/>
            <person name="McLean J."/>
            <person name="Mooney P."/>
            <person name="Moule S."/>
            <person name="Mungall K.L."/>
            <person name="Murphy L.D."/>
            <person name="Niblett D."/>
            <person name="Odell C."/>
            <person name="Oliver K."/>
            <person name="O'Neil S."/>
            <person name="Pearson D."/>
            <person name="Quail M.A."/>
            <person name="Rabbinowitsch E."/>
            <person name="Rutherford K.M."/>
            <person name="Rutter S."/>
            <person name="Saunders D."/>
            <person name="Seeger K."/>
            <person name="Sharp S."/>
            <person name="Skelton J."/>
            <person name="Simmonds M.N."/>
            <person name="Squares R."/>
            <person name="Squares S."/>
            <person name="Stevens K."/>
            <person name="Taylor K."/>
            <person name="Taylor R.G."/>
            <person name="Tivey A."/>
            <person name="Walsh S.V."/>
            <person name="Warren T."/>
            <person name="Whitehead S."/>
            <person name="Woodward J.R."/>
            <person name="Volckaert G."/>
            <person name="Aert R."/>
            <person name="Robben J."/>
            <person name="Grymonprez B."/>
            <person name="Weltjens I."/>
            <person name="Vanstreels E."/>
            <person name="Rieger M."/>
            <person name="Schaefer M."/>
            <person name="Mueller-Auer S."/>
            <person name="Gabel C."/>
            <person name="Fuchs M."/>
            <person name="Duesterhoeft A."/>
            <person name="Fritzc C."/>
            <person name="Holzer E."/>
            <person name="Moestl D."/>
            <person name="Hilbert H."/>
            <person name="Borzym K."/>
            <person name="Langer I."/>
            <person name="Beck A."/>
            <person name="Lehrach H."/>
            <person name="Reinhardt R."/>
            <person name="Pohl T.M."/>
            <person name="Eger P."/>
            <person name="Zimmermann W."/>
            <person name="Wedler H."/>
            <person name="Wambutt R."/>
            <person name="Purnelle B."/>
            <person name="Goffeau A."/>
            <person name="Cadieu E."/>
            <person name="Dreano S."/>
            <person name="Gloux S."/>
            <person name="Lelaure V."/>
            <person name="Mottier S."/>
            <person name="Galibert F."/>
            <person name="Aves S.J."/>
            <person name="Xiang Z."/>
            <person name="Hunt C."/>
            <person name="Moore K."/>
            <person name="Hurst S.M."/>
            <person name="Lucas M."/>
            <person name="Rochet M."/>
            <person name="Gaillardin C."/>
            <person name="Tallada V.A."/>
            <person name="Garzon A."/>
            <person name="Thode G."/>
            <person name="Daga R.R."/>
            <person name="Cruzado L."/>
            <person name="Jimenez J."/>
            <person name="Sanchez M."/>
            <person name="del Rey F."/>
            <person name="Benito J."/>
            <person name="Dominguez A."/>
            <person name="Revuelta J.L."/>
            <person name="Moreno S."/>
            <person name="Armstrong J."/>
            <person name="Forsburg S.L."/>
            <person name="Cerutti L."/>
            <person name="Lowe T."/>
            <person name="McCombie W.R."/>
            <person name="Paulsen I."/>
            <person name="Potashkin J."/>
            <person name="Shpakovski G.V."/>
            <person name="Ussery D."/>
            <person name="Barrell B.G."/>
            <person name="Nurse P."/>
        </authorList>
    </citation>
    <scope>NUCLEOTIDE SEQUENCE [LARGE SCALE GENOMIC DNA]</scope>
    <source>
        <strain>972 / ATCC 24843</strain>
    </source>
</reference>
<reference key="2">
    <citation type="journal article" date="2006" name="Nat. Biotechnol.">
        <title>ORFeome cloning and global analysis of protein localization in the fission yeast Schizosaccharomyces pombe.</title>
        <authorList>
            <person name="Matsuyama A."/>
            <person name="Arai R."/>
            <person name="Yashiroda Y."/>
            <person name="Shirai A."/>
            <person name="Kamata A."/>
            <person name="Sekido S."/>
            <person name="Kobayashi Y."/>
            <person name="Hashimoto A."/>
            <person name="Hamamoto M."/>
            <person name="Hiraoka Y."/>
            <person name="Horinouchi S."/>
            <person name="Yoshida M."/>
        </authorList>
    </citation>
    <scope>SUBCELLULAR LOCATION [LARGE SCALE ANALYSIS]</scope>
</reference>
<reference key="3">
    <citation type="journal article" date="2009" name="FEMS Yeast Res.">
        <title>Identification and characterization of a gene required for alpha1,2-mannose extension in the O-linked glycan synthesis pathway in Schizosaccharomyces pombe.</title>
        <authorList>
            <person name="Ikeda Y."/>
            <person name="Ohashi T."/>
            <person name="Tanaka N."/>
            <person name="Takegawa K."/>
        </authorList>
    </citation>
    <scope>IDENTIFICATION</scope>
</reference>
<sequence>MRISRLLIRVLLGFVILFITYILFPSIPKALVNTLNVYKLEERLNYYNDRLLDGNLKSKELENATFVTLARNADLYDLIETINIYENRFNSKHNYPWVFLNDEPFTRTFEVVMSRLTSGPTYFGVVNSSEWDIPKWIDMDIAHSNWNRLSREGVLYGGMKSYRQMCRYFSGFFWRHPLLDPYKYYWRVEPSTKLLCEVNKDPFRQLRLLNKTYGFVITLFEIGQTVPSLWNSTLEFIEKYPETLAKNNLWEWISDDNGKKFSHCHFWSNFEIADLDFFRSDSYRKYFDFLDKKGGFFYERWGDAPVHSIALSLFLDRNKLHYFDEIGYSHAPLLHCPRKGRCFCKPEEIDLSSNSSCIARFINLTNEDYDEL</sequence>
<gene>
    <name type="primary">omh2</name>
    <name type="ORF">SPBC16H5.09c</name>
</gene>
<protein>
    <recommendedName>
        <fullName>O-glycoside alpha-1,2-mannosyltransferase homolog 2</fullName>
        <ecNumber>2.4.1.-</ecNumber>
    </recommendedName>
</protein>
<organism>
    <name type="scientific">Schizosaccharomyces pombe (strain 972 / ATCC 24843)</name>
    <name type="common">Fission yeast</name>
    <dbReference type="NCBI Taxonomy" id="284812"/>
    <lineage>
        <taxon>Eukaryota</taxon>
        <taxon>Fungi</taxon>
        <taxon>Dikarya</taxon>
        <taxon>Ascomycota</taxon>
        <taxon>Taphrinomycotina</taxon>
        <taxon>Schizosaccharomycetes</taxon>
        <taxon>Schizosaccharomycetales</taxon>
        <taxon>Schizosaccharomycetaceae</taxon>
        <taxon>Schizosaccharomyces</taxon>
    </lineage>
</organism>
<name>OMH2_SCHPO</name>